<comment type="function">
    <text evidence="1">Part of the Tol-Pal system, which plays a role in outer membrane invagination during cell division and is important for maintaining outer membrane integrity.</text>
</comment>
<comment type="subunit">
    <text evidence="1">The Tol-Pal system is composed of five core proteins: the inner membrane proteins TolA, TolQ and TolR, the periplasmic protein TolB and the outer membrane protein Pal. They form a network linking the inner and outer membranes and the peptidoglycan layer.</text>
</comment>
<comment type="subcellular location">
    <subcellularLocation>
        <location evidence="1">Periplasm</location>
    </subcellularLocation>
</comment>
<comment type="similarity">
    <text evidence="1">Belongs to the TolB family.</text>
</comment>
<evidence type="ECO:0000255" key="1">
    <source>
        <dbReference type="HAMAP-Rule" id="MF_00671"/>
    </source>
</evidence>
<keyword id="KW-0131">Cell cycle</keyword>
<keyword id="KW-0132">Cell division</keyword>
<keyword id="KW-0574">Periplasm</keyword>
<keyword id="KW-1185">Reference proteome</keyword>
<keyword id="KW-0732">Signal</keyword>
<feature type="signal peptide" evidence="1">
    <location>
        <begin position="1"/>
        <end position="21"/>
    </location>
</feature>
<feature type="chain" id="PRO_1000082944" description="Tol-Pal system protein TolB" evidence="1">
    <location>
        <begin position="22"/>
        <end position="440"/>
    </location>
</feature>
<accession>A8H5P7</accession>
<dbReference type="EMBL" id="CP000851">
    <property type="protein sequence ID" value="ABV87884.1"/>
    <property type="molecule type" value="Genomic_DNA"/>
</dbReference>
<dbReference type="RefSeq" id="WP_012155791.1">
    <property type="nucleotide sequence ID" value="NC_009901.1"/>
</dbReference>
<dbReference type="SMR" id="A8H5P7"/>
<dbReference type="STRING" id="398579.Spea_2564"/>
<dbReference type="KEGG" id="spl:Spea_2564"/>
<dbReference type="eggNOG" id="COG0823">
    <property type="taxonomic scope" value="Bacteria"/>
</dbReference>
<dbReference type="HOGENOM" id="CLU_047123_0_0_6"/>
<dbReference type="OrthoDB" id="9802240at2"/>
<dbReference type="Proteomes" id="UP000002608">
    <property type="component" value="Chromosome"/>
</dbReference>
<dbReference type="GO" id="GO:0042597">
    <property type="term" value="C:periplasmic space"/>
    <property type="evidence" value="ECO:0007669"/>
    <property type="project" value="UniProtKB-SubCell"/>
</dbReference>
<dbReference type="GO" id="GO:0051301">
    <property type="term" value="P:cell division"/>
    <property type="evidence" value="ECO:0007669"/>
    <property type="project" value="UniProtKB-UniRule"/>
</dbReference>
<dbReference type="GO" id="GO:0017038">
    <property type="term" value="P:protein import"/>
    <property type="evidence" value="ECO:0007669"/>
    <property type="project" value="InterPro"/>
</dbReference>
<dbReference type="Gene3D" id="2.120.10.30">
    <property type="entry name" value="TolB, C-terminal domain"/>
    <property type="match status" value="1"/>
</dbReference>
<dbReference type="Gene3D" id="3.40.50.10070">
    <property type="entry name" value="TolB, N-terminal domain"/>
    <property type="match status" value="1"/>
</dbReference>
<dbReference type="HAMAP" id="MF_00671">
    <property type="entry name" value="TolB"/>
    <property type="match status" value="1"/>
</dbReference>
<dbReference type="InterPro" id="IPR011042">
    <property type="entry name" value="6-blade_b-propeller_TolB-like"/>
</dbReference>
<dbReference type="InterPro" id="IPR011659">
    <property type="entry name" value="PD40"/>
</dbReference>
<dbReference type="InterPro" id="IPR014167">
    <property type="entry name" value="Tol-Pal_TolB"/>
</dbReference>
<dbReference type="InterPro" id="IPR007195">
    <property type="entry name" value="TolB_N"/>
</dbReference>
<dbReference type="NCBIfam" id="TIGR02800">
    <property type="entry name" value="propeller_TolB"/>
    <property type="match status" value="1"/>
</dbReference>
<dbReference type="PANTHER" id="PTHR36842:SF1">
    <property type="entry name" value="PROTEIN TOLB"/>
    <property type="match status" value="1"/>
</dbReference>
<dbReference type="PANTHER" id="PTHR36842">
    <property type="entry name" value="PROTEIN TOLB HOMOLOG"/>
    <property type="match status" value="1"/>
</dbReference>
<dbReference type="Pfam" id="PF07676">
    <property type="entry name" value="PD40"/>
    <property type="match status" value="4"/>
</dbReference>
<dbReference type="Pfam" id="PF04052">
    <property type="entry name" value="TolB_N"/>
    <property type="match status" value="1"/>
</dbReference>
<dbReference type="SUPFAM" id="SSF52964">
    <property type="entry name" value="TolB, N-terminal domain"/>
    <property type="match status" value="1"/>
</dbReference>
<dbReference type="SUPFAM" id="SSF69304">
    <property type="entry name" value="Tricorn protease N-terminal domain"/>
    <property type="match status" value="1"/>
</dbReference>
<name>TOLB_SHEPA</name>
<protein>
    <recommendedName>
        <fullName evidence="1">Tol-Pal system protein TolB</fullName>
    </recommendedName>
</protein>
<reference key="1">
    <citation type="submission" date="2007-10" db="EMBL/GenBank/DDBJ databases">
        <title>Complete sequence of Shewanella pealeana ATCC 700345.</title>
        <authorList>
            <consortium name="US DOE Joint Genome Institute"/>
            <person name="Copeland A."/>
            <person name="Lucas S."/>
            <person name="Lapidus A."/>
            <person name="Barry K."/>
            <person name="Glavina del Rio T."/>
            <person name="Dalin E."/>
            <person name="Tice H."/>
            <person name="Pitluck S."/>
            <person name="Chertkov O."/>
            <person name="Brettin T."/>
            <person name="Bruce D."/>
            <person name="Detter J.C."/>
            <person name="Han C."/>
            <person name="Schmutz J."/>
            <person name="Larimer F."/>
            <person name="Land M."/>
            <person name="Hauser L."/>
            <person name="Kyrpides N."/>
            <person name="Kim E."/>
            <person name="Zhao J.-S.Z."/>
            <person name="Manno D."/>
            <person name="Hawari J."/>
            <person name="Richardson P."/>
        </authorList>
    </citation>
    <scope>NUCLEOTIDE SEQUENCE [LARGE SCALE GENOMIC DNA]</scope>
    <source>
        <strain>ATCC 700345 / ANG-SQ1</strain>
    </source>
</reference>
<gene>
    <name evidence="1" type="primary">tolB</name>
    <name type="ordered locus">Spea_2564</name>
</gene>
<proteinExistence type="inferred from homology"/>
<organism>
    <name type="scientific">Shewanella pealeana (strain ATCC 700345 / ANG-SQ1)</name>
    <dbReference type="NCBI Taxonomy" id="398579"/>
    <lineage>
        <taxon>Bacteria</taxon>
        <taxon>Pseudomonadati</taxon>
        <taxon>Pseudomonadota</taxon>
        <taxon>Gammaproteobacteria</taxon>
        <taxon>Alteromonadales</taxon>
        <taxon>Shewanellaceae</taxon>
        <taxon>Shewanella</taxon>
    </lineage>
</organism>
<sequence>MKNLGKWLLTSLLICSMPVKAALDIIITEGVDAARPIAVIPFVWQGTGPMPSQISDVVMSDLARSGTFSPADELSLPQRGISTLAQFNASAWMAQPAEAVVMGSIKPYGGDKYLVSFELIDLVKAQLQSDSMSTKDLVIDSRETVISAAQFRQYGHRISDVVYEKLTGIRGAFLTRVAYVVVNHGEKSPYKLMIADYDGYNEQMLLRSPEPLMSPSWSPDGQSLAYVSFENRKAEVFVQNIYTQQRTKITSFDGINGAPVFSPDGKKLAVTLSKDGQPEVYVVDIATKAIKRVTNHYAIDTEPSWFPDGKSLLITSERGGRPQLYRVFLDSGKISRLTFEGEWNLGGSISPDGRSIIFVNRINGKFNIARMDLETRFMQVLTSTRLDESPSVAPNGTMVIYGTTYQGKQVLAAVSMDGRFKARLPAGQGEVKSPSWSPFL</sequence>